<reference key="1">
    <citation type="journal article" date="2002" name="J. Bacteriol.">
        <title>Microviridae, a family divided: isolation, characterization, and genome sequence of phiMH2K, a bacteriophage of the obligate intracellular parasitic bacterium Bdellovibrio bacteriovorus.</title>
        <authorList>
            <person name="Brentlinger K.L."/>
            <person name="Hafenstein S."/>
            <person name="Novak C.R."/>
            <person name="Fane B.A."/>
            <person name="Borgon R."/>
            <person name="McKenna R."/>
            <person name="Agbandje-McKenna M."/>
        </authorList>
    </citation>
    <scope>NUCLEOTIDE SEQUENCE [GENOMIC DNA]</scope>
</reference>
<feature type="chain" id="PRO_0000372062" description="Uncharacterized protein Y">
    <location>
        <begin position="1"/>
        <end position="63"/>
    </location>
</feature>
<protein>
    <recommendedName>
        <fullName>Uncharacterized protein Y</fullName>
    </recommendedName>
</protein>
<dbReference type="EMBL" id="AF306496">
    <property type="protein sequence ID" value="AAG45342.1"/>
    <property type="molecule type" value="Genomic_DNA"/>
</dbReference>
<dbReference type="RefSeq" id="NP_073540.1">
    <property type="nucleotide sequence ID" value="NC_002643.1"/>
</dbReference>
<dbReference type="KEGG" id="vg:918754"/>
<dbReference type="Proteomes" id="UP000002418">
    <property type="component" value="Genome"/>
</dbReference>
<organismHost>
    <name type="scientific">Bdellovibrio bacteriovorus</name>
    <dbReference type="NCBI Taxonomy" id="959"/>
</organismHost>
<proteinExistence type="predicted"/>
<gene>
    <name type="ORF">Y</name>
</gene>
<name>Y_BPPHM</name>
<keyword id="KW-1185">Reference proteome</keyword>
<accession>Q9G057</accession>
<sequence length="63" mass="7203">MLYLSELTILSITTGSETKILSEKSPFLKETDQTTTRTINYSKPQNRTTTSQAHYLGHKKAWL</sequence>
<organism>
    <name type="scientific">Bdellovibrio phage phiMH2K</name>
    <name type="common">Bacteriophage phiMH2K</name>
    <dbReference type="NCBI Taxonomy" id="145579"/>
    <lineage>
        <taxon>Viruses</taxon>
        <taxon>Monodnaviria</taxon>
        <taxon>Sangervirae</taxon>
        <taxon>Phixviricota</taxon>
        <taxon>Malgrandaviricetes</taxon>
        <taxon>Petitvirales</taxon>
        <taxon>Microviridae</taxon>
        <taxon>Gokushovirinae</taxon>
        <taxon>Bdellomicrovirus</taxon>
        <taxon>Bdellomicrovirus MH2K</taxon>
    </lineage>
</organism>